<reference key="1">
    <citation type="journal article" date="2005" name="Nature">
        <title>The map-based sequence of the rice genome.</title>
        <authorList>
            <consortium name="International rice genome sequencing project (IRGSP)"/>
        </authorList>
    </citation>
    <scope>NUCLEOTIDE SEQUENCE [LARGE SCALE GENOMIC DNA]</scope>
    <source>
        <strain>cv. Nipponbare</strain>
    </source>
</reference>
<reference key="2">
    <citation type="journal article" date="2008" name="Nucleic Acids Res.">
        <title>The rice annotation project database (RAP-DB): 2008 update.</title>
        <authorList>
            <consortium name="The rice annotation project (RAP)"/>
        </authorList>
    </citation>
    <scope>GENOME REANNOTATION</scope>
    <source>
        <strain>cv. Nipponbare</strain>
    </source>
</reference>
<reference key="3">
    <citation type="journal article" date="2013" name="Rice">
        <title>Improvement of the Oryza sativa Nipponbare reference genome using next generation sequence and optical map data.</title>
        <authorList>
            <person name="Kawahara Y."/>
            <person name="de la Bastide M."/>
            <person name="Hamilton J.P."/>
            <person name="Kanamori H."/>
            <person name="McCombie W.R."/>
            <person name="Ouyang S."/>
            <person name="Schwartz D.C."/>
            <person name="Tanaka T."/>
            <person name="Wu J."/>
            <person name="Zhou S."/>
            <person name="Childs K.L."/>
            <person name="Davidson R.M."/>
            <person name="Lin H."/>
            <person name="Quesada-Ocampo L."/>
            <person name="Vaillancourt B."/>
            <person name="Sakai H."/>
            <person name="Lee S.S."/>
            <person name="Kim J."/>
            <person name="Numa H."/>
            <person name="Itoh T."/>
            <person name="Buell C.R."/>
            <person name="Matsumoto T."/>
        </authorList>
    </citation>
    <scope>GENOME REANNOTATION</scope>
    <source>
        <strain>cv. Nipponbare</strain>
    </source>
</reference>
<reference key="4">
    <citation type="journal article" date="2005" name="PLoS Biol.">
        <title>The genomes of Oryza sativa: a history of duplications.</title>
        <authorList>
            <person name="Yu J."/>
            <person name="Wang J."/>
            <person name="Lin W."/>
            <person name="Li S."/>
            <person name="Li H."/>
            <person name="Zhou J."/>
            <person name="Ni P."/>
            <person name="Dong W."/>
            <person name="Hu S."/>
            <person name="Zeng C."/>
            <person name="Zhang J."/>
            <person name="Zhang Y."/>
            <person name="Li R."/>
            <person name="Xu Z."/>
            <person name="Li S."/>
            <person name="Li X."/>
            <person name="Zheng H."/>
            <person name="Cong L."/>
            <person name="Lin L."/>
            <person name="Yin J."/>
            <person name="Geng J."/>
            <person name="Li G."/>
            <person name="Shi J."/>
            <person name="Liu J."/>
            <person name="Lv H."/>
            <person name="Li J."/>
            <person name="Wang J."/>
            <person name="Deng Y."/>
            <person name="Ran L."/>
            <person name="Shi X."/>
            <person name="Wang X."/>
            <person name="Wu Q."/>
            <person name="Li C."/>
            <person name="Ren X."/>
            <person name="Wang J."/>
            <person name="Wang X."/>
            <person name="Li D."/>
            <person name="Liu D."/>
            <person name="Zhang X."/>
            <person name="Ji Z."/>
            <person name="Zhao W."/>
            <person name="Sun Y."/>
            <person name="Zhang Z."/>
            <person name="Bao J."/>
            <person name="Han Y."/>
            <person name="Dong L."/>
            <person name="Ji J."/>
            <person name="Chen P."/>
            <person name="Wu S."/>
            <person name="Liu J."/>
            <person name="Xiao Y."/>
            <person name="Bu D."/>
            <person name="Tan J."/>
            <person name="Yang L."/>
            <person name="Ye C."/>
            <person name="Zhang J."/>
            <person name="Xu J."/>
            <person name="Zhou Y."/>
            <person name="Yu Y."/>
            <person name="Zhang B."/>
            <person name="Zhuang S."/>
            <person name="Wei H."/>
            <person name="Liu B."/>
            <person name="Lei M."/>
            <person name="Yu H."/>
            <person name="Li Y."/>
            <person name="Xu H."/>
            <person name="Wei S."/>
            <person name="He X."/>
            <person name="Fang L."/>
            <person name="Zhang Z."/>
            <person name="Zhang Y."/>
            <person name="Huang X."/>
            <person name="Su Z."/>
            <person name="Tong W."/>
            <person name="Li J."/>
            <person name="Tong Z."/>
            <person name="Li S."/>
            <person name="Ye J."/>
            <person name="Wang L."/>
            <person name="Fang L."/>
            <person name="Lei T."/>
            <person name="Chen C.-S."/>
            <person name="Chen H.-C."/>
            <person name="Xu Z."/>
            <person name="Li H."/>
            <person name="Huang H."/>
            <person name="Zhang F."/>
            <person name="Xu H."/>
            <person name="Li N."/>
            <person name="Zhao C."/>
            <person name="Li S."/>
            <person name="Dong L."/>
            <person name="Huang Y."/>
            <person name="Li L."/>
            <person name="Xi Y."/>
            <person name="Qi Q."/>
            <person name="Li W."/>
            <person name="Zhang B."/>
            <person name="Hu W."/>
            <person name="Zhang Y."/>
            <person name="Tian X."/>
            <person name="Jiao Y."/>
            <person name="Liang X."/>
            <person name="Jin J."/>
            <person name="Gao L."/>
            <person name="Zheng W."/>
            <person name="Hao B."/>
            <person name="Liu S.-M."/>
            <person name="Wang W."/>
            <person name="Yuan L."/>
            <person name="Cao M."/>
            <person name="McDermott J."/>
            <person name="Samudrala R."/>
            <person name="Wang J."/>
            <person name="Wong G.K.-S."/>
            <person name="Yang H."/>
        </authorList>
    </citation>
    <scope>NUCLEOTIDE SEQUENCE [LARGE SCALE GENOMIC DNA]</scope>
    <source>
        <strain>cv. Nipponbare</strain>
    </source>
</reference>
<reference key="5">
    <citation type="journal article" date="2003" name="Science">
        <title>Collection, mapping, and annotation of over 28,000 cDNA clones from japonica rice.</title>
        <authorList>
            <consortium name="The rice full-length cDNA consortium"/>
        </authorList>
    </citation>
    <scope>NUCLEOTIDE SEQUENCE [LARGE SCALE MRNA]</scope>
    <source>
        <strain>cv. Nipponbare</strain>
    </source>
</reference>
<accession>Q652P9</accession>
<accession>A0A0P0XRJ6</accession>
<gene>
    <name type="ordered locus">Os09g0568700</name>
    <name type="ordered locus">LOC_Os09g39530</name>
    <name type="ORF">OJ1003_C09.14</name>
    <name type="ORF">OsJ_029209</name>
</gene>
<evidence type="ECO:0000250" key="1"/>
<evidence type="ECO:0000255" key="2"/>
<evidence type="ECO:0000305" key="3"/>
<comment type="function">
    <text>May play a role in plant defense. Probably has no oxalate oxidase activity even if the active site is conserved.</text>
</comment>
<comment type="subunit">
    <text evidence="1">Oligomer (believed to be a pentamer but probably hexamer).</text>
</comment>
<comment type="subcellular location">
    <subcellularLocation>
        <location evidence="1">Secreted</location>
        <location evidence="1">Extracellular space</location>
        <location evidence="1">Apoplast</location>
    </subcellularLocation>
</comment>
<comment type="similarity">
    <text evidence="3">Belongs to the germin family.</text>
</comment>
<proteinExistence type="evidence at transcript level"/>
<feature type="signal peptide" evidence="2">
    <location>
        <begin position="1"/>
        <end position="23"/>
    </location>
</feature>
<feature type="chain" id="PRO_0000365529" description="Germin-like protein 9-3">
    <location>
        <begin position="24"/>
        <end position="214"/>
    </location>
</feature>
<feature type="domain" description="Cupin type-1" evidence="2">
    <location>
        <begin position="59"/>
        <end position="202"/>
    </location>
</feature>
<feature type="binding site" evidence="1">
    <location>
        <position position="104"/>
    </location>
    <ligand>
        <name>Mn(2+)</name>
        <dbReference type="ChEBI" id="CHEBI:29035"/>
    </ligand>
</feature>
<feature type="binding site" evidence="1">
    <location>
        <position position="106"/>
    </location>
    <ligand>
        <name>Mn(2+)</name>
        <dbReference type="ChEBI" id="CHEBI:29035"/>
    </ligand>
</feature>
<feature type="binding site" evidence="1">
    <location>
        <position position="111"/>
    </location>
    <ligand>
        <name>Mn(2+)</name>
        <dbReference type="ChEBI" id="CHEBI:29035"/>
    </ligand>
</feature>
<feature type="binding site" evidence="1">
    <location>
        <position position="150"/>
    </location>
    <ligand>
        <name>Mn(2+)</name>
        <dbReference type="ChEBI" id="CHEBI:29035"/>
    </ligand>
</feature>
<feature type="glycosylation site" description="N-linked (GlcNAc...) asparagine" evidence="2">
    <location>
        <position position="42"/>
    </location>
</feature>
<feature type="glycosylation site" description="N-linked (GlcNAc...) asparagine" evidence="2">
    <location>
        <position position="60"/>
    </location>
</feature>
<feature type="glycosylation site" description="N-linked (GlcNAc...) asparagine" evidence="2">
    <location>
        <position position="69"/>
    </location>
</feature>
<sequence length="214" mass="22456">MASSILLLVVLAVVSAPVALVMAGDPDILTDYVIPAGSNAENITGDFFTFTGFRNPLSMNMSMPMPNANFTVTKATMAEFPALNGQSVSYAVLMYPPATLNPPHTHPRSAELLLLVDGALSVGFVDTTNKLYTQDLAAGDMFVFPKGMVHFQFNSGNQPAMALSAFGSAAAGLVSVPVTVFGTNIDDAVLAKSFKTDVPTIQKLKAGLTPPKKA</sequence>
<keyword id="KW-0052">Apoplast</keyword>
<keyword id="KW-0325">Glycoprotein</keyword>
<keyword id="KW-0464">Manganese</keyword>
<keyword id="KW-0479">Metal-binding</keyword>
<keyword id="KW-1185">Reference proteome</keyword>
<keyword id="KW-0964">Secreted</keyword>
<keyword id="KW-0732">Signal</keyword>
<dbReference type="EMBL" id="AP005546">
    <property type="protein sequence ID" value="BAD46218.1"/>
    <property type="molecule type" value="Genomic_DNA"/>
</dbReference>
<dbReference type="EMBL" id="AP008215">
    <property type="protein sequence ID" value="BAF25886.1"/>
    <property type="molecule type" value="Genomic_DNA"/>
</dbReference>
<dbReference type="EMBL" id="AP014965">
    <property type="protein sequence ID" value="BAT09492.1"/>
    <property type="molecule type" value="Genomic_DNA"/>
</dbReference>
<dbReference type="EMBL" id="CM000146">
    <property type="protein sequence ID" value="EAZ45726.1"/>
    <property type="molecule type" value="Genomic_DNA"/>
</dbReference>
<dbReference type="EMBL" id="AK109010">
    <property type="protein sequence ID" value="BAG98585.1"/>
    <property type="molecule type" value="mRNA"/>
</dbReference>
<dbReference type="RefSeq" id="XP_015612248.1">
    <property type="nucleotide sequence ID" value="XM_015756762.1"/>
</dbReference>
<dbReference type="SMR" id="Q652P9"/>
<dbReference type="FunCoup" id="Q652P9">
    <property type="interactions" value="59"/>
</dbReference>
<dbReference type="STRING" id="39947.Q652P9"/>
<dbReference type="PaxDb" id="39947-Q652P9"/>
<dbReference type="EnsemblPlants" id="Os09t0568700-01">
    <property type="protein sequence ID" value="Os09t0568700-01"/>
    <property type="gene ID" value="Os09g0568700"/>
</dbReference>
<dbReference type="Gramene" id="Os09t0568700-01">
    <property type="protein sequence ID" value="Os09t0568700-01"/>
    <property type="gene ID" value="Os09g0568700"/>
</dbReference>
<dbReference type="KEGG" id="dosa:Os09g0568700"/>
<dbReference type="eggNOG" id="ENOG502QYH0">
    <property type="taxonomic scope" value="Eukaryota"/>
</dbReference>
<dbReference type="HOGENOM" id="CLU_015790_0_3_1"/>
<dbReference type="InParanoid" id="Q652P9"/>
<dbReference type="OMA" id="DANNPAM"/>
<dbReference type="OrthoDB" id="1546383at2759"/>
<dbReference type="Proteomes" id="UP000000763">
    <property type="component" value="Chromosome 9"/>
</dbReference>
<dbReference type="Proteomes" id="UP000007752">
    <property type="component" value="Chromosome 9"/>
</dbReference>
<dbReference type="Proteomes" id="UP000059680">
    <property type="component" value="Chromosome 9"/>
</dbReference>
<dbReference type="GO" id="GO:0048046">
    <property type="term" value="C:apoplast"/>
    <property type="evidence" value="ECO:0007669"/>
    <property type="project" value="UniProtKB-SubCell"/>
</dbReference>
<dbReference type="GO" id="GO:0030145">
    <property type="term" value="F:manganese ion binding"/>
    <property type="evidence" value="ECO:0007669"/>
    <property type="project" value="InterPro"/>
</dbReference>
<dbReference type="CDD" id="cd02241">
    <property type="entry name" value="cupin_OxOx"/>
    <property type="match status" value="1"/>
</dbReference>
<dbReference type="FunFam" id="2.60.120.10:FF:000098">
    <property type="entry name" value="Germin-like protein 9-3"/>
    <property type="match status" value="1"/>
</dbReference>
<dbReference type="Gene3D" id="2.60.120.10">
    <property type="entry name" value="Jelly Rolls"/>
    <property type="match status" value="1"/>
</dbReference>
<dbReference type="InterPro" id="IPR006045">
    <property type="entry name" value="Cupin_1"/>
</dbReference>
<dbReference type="InterPro" id="IPR001929">
    <property type="entry name" value="Germin"/>
</dbReference>
<dbReference type="InterPro" id="IPR014710">
    <property type="entry name" value="RmlC-like_jellyroll"/>
</dbReference>
<dbReference type="InterPro" id="IPR011051">
    <property type="entry name" value="RmlC_Cupin_sf"/>
</dbReference>
<dbReference type="PANTHER" id="PTHR31238">
    <property type="entry name" value="GERMIN-LIKE PROTEIN SUBFAMILY 3 MEMBER 3"/>
    <property type="match status" value="1"/>
</dbReference>
<dbReference type="Pfam" id="PF00190">
    <property type="entry name" value="Cupin_1"/>
    <property type="match status" value="1"/>
</dbReference>
<dbReference type="PRINTS" id="PR00325">
    <property type="entry name" value="GERMIN"/>
</dbReference>
<dbReference type="SMART" id="SM00835">
    <property type="entry name" value="Cupin_1"/>
    <property type="match status" value="1"/>
</dbReference>
<dbReference type="SUPFAM" id="SSF51182">
    <property type="entry name" value="RmlC-like cupins"/>
    <property type="match status" value="1"/>
</dbReference>
<protein>
    <recommendedName>
        <fullName>Germin-like protein 9-3</fullName>
    </recommendedName>
</protein>
<name>GL93_ORYSJ</name>
<organism>
    <name type="scientific">Oryza sativa subsp. japonica</name>
    <name type="common">Rice</name>
    <dbReference type="NCBI Taxonomy" id="39947"/>
    <lineage>
        <taxon>Eukaryota</taxon>
        <taxon>Viridiplantae</taxon>
        <taxon>Streptophyta</taxon>
        <taxon>Embryophyta</taxon>
        <taxon>Tracheophyta</taxon>
        <taxon>Spermatophyta</taxon>
        <taxon>Magnoliopsida</taxon>
        <taxon>Liliopsida</taxon>
        <taxon>Poales</taxon>
        <taxon>Poaceae</taxon>
        <taxon>BOP clade</taxon>
        <taxon>Oryzoideae</taxon>
        <taxon>Oryzeae</taxon>
        <taxon>Oryzinae</taxon>
        <taxon>Oryza</taxon>
        <taxon>Oryza sativa</taxon>
    </lineage>
</organism>